<gene>
    <name evidence="14" type="primary">ORC1</name>
    <name type="ORF">PF3D7_1203000</name>
    <name type="ORF">PFL0150w</name>
</gene>
<accession>Q8I615</accession>
<accession>A0A144A1W6</accession>
<accession>Q967Q7</accession>
<proteinExistence type="evidence at protein level"/>
<comment type="function">
    <text evidence="8 10 11 12 16">Component of the origin recognition complex (ORC) that binds origins of replication and thus may regulate the initiation of DNA replication (Probable). DNA-binding may not be ATP-dependent (PubMed:19633266). In a SIR2A/Sir2-dependent manner, binds to and silences telomers and subtelomeric repeat regions (TAREs) (PubMed:18525026, PubMed:22379140, PubMed:24018145). In a SIR2A/Sir2-dependent manner, binds to promoters of var genes localized next to TAREs resulting in their silencing (PubMed:22379140).</text>
</comment>
<comment type="catalytic activity">
    <reaction evidence="6 10">
        <text>ATP + H2O = ADP + phosphate + H(+)</text>
        <dbReference type="Rhea" id="RHEA:13065"/>
        <dbReference type="ChEBI" id="CHEBI:15377"/>
        <dbReference type="ChEBI" id="CHEBI:15378"/>
        <dbReference type="ChEBI" id="CHEBI:30616"/>
        <dbReference type="ChEBI" id="CHEBI:43474"/>
        <dbReference type="ChEBI" id="CHEBI:456216"/>
    </reaction>
</comment>
<comment type="subunit">
    <text evidence="1 9 10">Component of the origin recognition complex (ORC) (By similarity). Interacts (via PIP-box) with PCNA1; the interaction occurs during DNA replication in trophozoites (PubMed:18554328, PubMed:19633266).</text>
</comment>
<comment type="subcellular location">
    <subcellularLocation>
        <location evidence="6 8 9 10 11">Nucleus</location>
    </subcellularLocation>
    <subcellularLocation>
        <location evidence="8 11">Chromosome</location>
        <location evidence="8 11">Telomere</location>
    </subcellularLocation>
    <subcellularLocation>
        <location evidence="8">Nucleus</location>
        <location evidence="8">Nucleolus</location>
    </subcellularLocation>
    <text evidence="8 9 10 11 13">At the late ring stage/early trophozoites, co-localizes with SIR2A/Sir2 to telomeres and subtelomeric regions (TAREs) in the nuclear periphery (PubMed:18525026, PubMed:22379140, PubMed:26094711). Also, partially localizes to the nucleolus (PubMed:18525026). In trophozoites and early schizonts localizes throughout the nucleus (PubMed:18525026, PubMed:26094711). During early-to mid replicating trophozoite stages, colocalizes with PCNA1 and ORC1 to distinct nuclear foci which probably are DNA replication origin sites (PubMed:18554328, PubMed:19633266). In schizonts, relocalizes to the nuclear periphery and cytoplasm (PubMed:18525026, PubMed:26094711). In late schizonts, expression decreases probably due to proteosome-mediated degradation (PubMed:18554328, PubMed:26094711).</text>
</comment>
<comment type="developmental stage">
    <text evidence="5 6 8 9 10 11 13">Expressed during the asexual blood stage, specifically during the late trophozoite and early schizont stages (at protein level) (PubMed:16216221, PubMed:18525026, PubMed:18554328, PubMed:19633266, PubMed:22379140, PubMed:26094711). Some expression has been found also at the ring stage (at protein level) (PubMed:18525026, PubMed:18554328, PubMed:22379140, PubMed:26094711). Highly expressed during the sexual blood stage (PubMed:12543146).</text>
</comment>
<comment type="domain">
    <text evidence="11 12 13">The N-terminal domain binds telomeric DNA and is required for the silencing of telomers and var genes.</text>
</comment>
<comment type="domain">
    <text evidence="10 12">The C-terminal domain binds ATP and is required for the binding to DNA replication origin sites.</text>
</comment>
<comment type="domain">
    <text evidence="11">Leucine heptad repeats are essential for the binding to telomeric DNA.</text>
</comment>
<comment type="PTM">
    <text evidence="13">In schizonts, may be phosphorylated by PK5; phosphorylation leads to ORC1 dissociation from the telomeres and var gene promoters, translocation to the cytoplasm, where it is degraded by the proteasome.</text>
</comment>
<comment type="biotechnology">
    <text evidence="7">Possible candidate for an effective malaria vaccine as determined by epitope response in sera.</text>
</comment>
<comment type="similarity">
    <text evidence="3">Belongs to the ORC1 family.</text>
</comment>
<feature type="chain" id="PRO_0000386592" description="Origin recognition complex subunit 1">
    <location>
        <begin position="1"/>
        <end position="1189"/>
    </location>
</feature>
<feature type="repeat" description="Leucine heptad repeat 1" evidence="17">
    <location>
        <begin position="137"/>
        <end position="143"/>
    </location>
</feature>
<feature type="repeat" description="Leucine heptad repeat 2" evidence="17">
    <location>
        <begin position="144"/>
        <end position="150"/>
    </location>
</feature>
<feature type="repeat" description="Leucine heptad repeat 3" evidence="17">
    <location>
        <begin position="151"/>
        <end position="157"/>
    </location>
</feature>
<feature type="repeat" description="Leucine heptad repeat 4" evidence="17">
    <location>
        <begin position="158"/>
        <end position="164"/>
    </location>
</feature>
<feature type="region of interest" description="Required for peripherial nuclear localization" evidence="11">
    <location>
        <begin position="1"/>
        <end position="53"/>
    </location>
</feature>
<feature type="region of interest" description="Disordered" evidence="4">
    <location>
        <begin position="239"/>
        <end position="421"/>
    </location>
</feature>
<feature type="region of interest" description="Disordered" evidence="4">
    <location>
        <begin position="679"/>
        <end position="749"/>
    </location>
</feature>
<feature type="short sequence motif" description="PIP-box" evidence="15 16">
    <location>
        <begin position="913"/>
        <end position="922"/>
    </location>
</feature>
<feature type="compositionally biased region" description="Basic residues" evidence="4">
    <location>
        <begin position="239"/>
        <end position="248"/>
    </location>
</feature>
<feature type="compositionally biased region" description="Basic and acidic residues" evidence="4">
    <location>
        <begin position="254"/>
        <end position="279"/>
    </location>
</feature>
<feature type="compositionally biased region" description="Low complexity" evidence="4">
    <location>
        <begin position="304"/>
        <end position="320"/>
    </location>
</feature>
<feature type="compositionally biased region" description="Polar residues" evidence="4">
    <location>
        <begin position="321"/>
        <end position="339"/>
    </location>
</feature>
<feature type="compositionally biased region" description="Low complexity" evidence="4">
    <location>
        <begin position="353"/>
        <end position="381"/>
    </location>
</feature>
<feature type="compositionally biased region" description="Basic and acidic residues" evidence="4">
    <location>
        <begin position="385"/>
        <end position="394"/>
    </location>
</feature>
<feature type="compositionally biased region" description="Low complexity" evidence="4">
    <location>
        <begin position="395"/>
        <end position="411"/>
    </location>
</feature>
<feature type="compositionally biased region" description="Polar residues" evidence="4">
    <location>
        <begin position="695"/>
        <end position="709"/>
    </location>
</feature>
<feature type="compositionally biased region" description="Basic and acidic residues" evidence="4">
    <location>
        <begin position="710"/>
        <end position="724"/>
    </location>
</feature>
<feature type="compositionally biased region" description="Basic and acidic residues" evidence="4">
    <location>
        <begin position="733"/>
        <end position="742"/>
    </location>
</feature>
<feature type="binding site" evidence="2">
    <location>
        <position position="780"/>
    </location>
    <ligand>
        <name>ATP</name>
        <dbReference type="ChEBI" id="CHEBI:30616"/>
    </ligand>
</feature>
<feature type="binding site" evidence="2">
    <location>
        <begin position="815"/>
        <end position="823"/>
    </location>
    <ligand>
        <name>ATP</name>
        <dbReference type="ChEBI" id="CHEBI:30616"/>
    </ligand>
</feature>
<feature type="binding site" evidence="2">
    <location>
        <position position="903"/>
    </location>
    <ligand>
        <name>Mg(2+)</name>
        <dbReference type="ChEBI" id="CHEBI:18420"/>
    </ligand>
</feature>
<feature type="binding site" evidence="2">
    <location>
        <position position="904"/>
    </location>
    <ligand>
        <name>ATP</name>
        <dbReference type="ChEBI" id="CHEBI:30616"/>
    </ligand>
</feature>
<feature type="binding site" evidence="2">
    <location>
        <position position="904"/>
    </location>
    <ligand>
        <name>Mg(2+)</name>
        <dbReference type="ChEBI" id="CHEBI:18420"/>
    </ligand>
</feature>
<feature type="binding site" evidence="2">
    <location>
        <position position="937"/>
    </location>
    <ligand>
        <name>ATP</name>
        <dbReference type="ChEBI" id="CHEBI:30616"/>
    </ligand>
</feature>
<feature type="binding site" evidence="2">
    <location>
        <position position="1003"/>
    </location>
    <ligand>
        <name>ATP</name>
        <dbReference type="ChEBI" id="CHEBI:30616"/>
    </ligand>
</feature>
<feature type="modified residue" description="Phosphothreonine" evidence="18">
    <location>
        <position position="2"/>
    </location>
</feature>
<feature type="modified residue" description="Phosphoserine" evidence="18">
    <location>
        <position position="20"/>
    </location>
</feature>
<reference evidence="19" key="1">
    <citation type="journal article" date="2003" name="Parasitol. Int.">
        <title>Characterisation of a sexual stage-specific gene encoding ORC1 homologue in the human malaria parasite Plasmodium falciparum.</title>
        <authorList>
            <person name="Li J.-L."/>
            <person name="Cox L.S."/>
        </authorList>
    </citation>
    <scope>NUCLEOTIDE SEQUENCE [GENOMIC DNA]</scope>
    <scope>DEVELOPMENTAL STAGE</scope>
</reference>
<reference key="2">
    <citation type="journal article" date="2002" name="Nature">
        <title>Genome sequence of the human malaria parasite Plasmodium falciparum.</title>
        <authorList>
            <person name="Gardner M.J."/>
            <person name="Hall N."/>
            <person name="Fung E."/>
            <person name="White O."/>
            <person name="Berriman M."/>
            <person name="Hyman R.W."/>
            <person name="Carlton J.M."/>
            <person name="Pain A."/>
            <person name="Nelson K.E."/>
            <person name="Bowman S."/>
            <person name="Paulsen I.T."/>
            <person name="James K.D."/>
            <person name="Eisen J.A."/>
            <person name="Rutherford K.M."/>
            <person name="Salzberg S.L."/>
            <person name="Craig A."/>
            <person name="Kyes S."/>
            <person name="Chan M.-S."/>
            <person name="Nene V."/>
            <person name="Shallom S.J."/>
            <person name="Suh B."/>
            <person name="Peterson J."/>
            <person name="Angiuoli S."/>
            <person name="Pertea M."/>
            <person name="Allen J."/>
            <person name="Selengut J."/>
            <person name="Haft D."/>
            <person name="Mather M.W."/>
            <person name="Vaidya A.B."/>
            <person name="Martin D.M.A."/>
            <person name="Fairlamb A.H."/>
            <person name="Fraunholz M.J."/>
            <person name="Roos D.S."/>
            <person name="Ralph S.A."/>
            <person name="McFadden G.I."/>
            <person name="Cummings L.M."/>
            <person name="Subramanian G.M."/>
            <person name="Mungall C."/>
            <person name="Venter J.C."/>
            <person name="Carucci D.J."/>
            <person name="Hoffman S.L."/>
            <person name="Newbold C."/>
            <person name="Davis R.W."/>
            <person name="Fraser C.M."/>
            <person name="Barrell B.G."/>
        </authorList>
    </citation>
    <scope>NUCLEOTIDE SEQUENCE [LARGE SCALE GENOMIC DNA]</scope>
    <source>
        <strain>3D7</strain>
    </source>
</reference>
<reference key="3">
    <citation type="journal article" date="2005" name="Biochem. Biophys. Res. Commun.">
        <title>Expression and characterization of human malaria parasite Plasmodium falciparum origin recognition complex subunit 1.</title>
        <authorList>
            <person name="Mehra P."/>
            <person name="Biswas A.K."/>
            <person name="Gupta A."/>
            <person name="Gourinath S."/>
            <person name="Chitnis C.E."/>
            <person name="Dhar S.K."/>
        </authorList>
    </citation>
    <scope>CATALYTIC ACTIVITY</scope>
    <scope>SUBCELLULAR LOCATION</scope>
    <scope>DEVELOPMENTAL STAGE</scope>
</reference>
<reference key="4">
    <citation type="journal article" date="2007" name="PLoS ONE">
        <title>Rapid identification of malaria vaccine candidates based on alpha-helical coiled coil protein motif.</title>
        <authorList>
            <person name="Villard V."/>
            <person name="Agak G.W."/>
            <person name="Frank G."/>
            <person name="Jafarshad A."/>
            <person name="Servis C."/>
            <person name="Nebie I."/>
            <person name="Sirima S.B."/>
            <person name="Felger I."/>
            <person name="Arevalo-Herrera M."/>
            <person name="Herrera S."/>
            <person name="Heitz F."/>
            <person name="Baecker V."/>
            <person name="Druilhe P."/>
            <person name="Kajava A.V."/>
            <person name="Corradin G."/>
        </authorList>
    </citation>
    <scope>SYNTHESIS OF 131-161</scope>
    <scope>POSSIBLE CANDIDATE MALARIA EPITOPE</scope>
</reference>
<reference key="5">
    <citation type="journal article" date="2008" name="J. Cell Sci.">
        <title>Differential association of Orc1 and Sir2 proteins to telomeric domains in Plasmodium falciparum.</title>
        <authorList>
            <person name="Mancio-Silva L."/>
            <person name="Rojas-Meza A.P."/>
            <person name="Vargas M."/>
            <person name="Scherf A."/>
            <person name="Hernandez-Rivas R."/>
        </authorList>
    </citation>
    <scope>FUNCTION</scope>
    <scope>SUBCELLULAR LOCATION</scope>
    <scope>DEVELOPMENTAL STAGE</scope>
</reference>
<reference key="6">
    <citation type="journal article" date="2008" name="Mol. Microbiol.">
        <title>Plasmodium falciparum origin recognition complex subunit 5: functional characterization and role in DNA replication foci formation.</title>
        <authorList>
            <person name="Gupta A."/>
            <person name="Mehra P."/>
            <person name="Dhar S.K."/>
        </authorList>
    </citation>
    <scope>INTERACTION WITH PCNA1</scope>
    <scope>SUBCELLULAR LOCATION</scope>
    <scope>DEVELOPMENTAL STAGE</scope>
    <scope>MOTIF</scope>
</reference>
<reference key="7">
    <citation type="journal article" date="2009" name="Eukaryot. Cell">
        <title>Functional dissection of the catalytic carboxyl-terminal domain of origin recognition complex subunit 1 (PfORC1) of the human malaria parasite Plasmodium falciparum.</title>
        <authorList>
            <person name="Gupta A."/>
            <person name="Mehra P."/>
            <person name="Deshmukh A."/>
            <person name="Dar A."/>
            <person name="Mitra P."/>
            <person name="Roy N."/>
            <person name="Dhar S.K."/>
        </authorList>
    </citation>
    <scope>FUNCTION</scope>
    <scope>CATALYTIC ACTIVITY</scope>
    <scope>INTERACTION WITH PCNA1</scope>
    <scope>SUBCELLULAR LOCATION</scope>
    <scope>DEVELOPMENTAL STAGE</scope>
    <scope>DOMAIN</scope>
    <scope>MOTIF</scope>
</reference>
<reference key="8">
    <citation type="journal article" date="2012" name="Nucleic Acids Res.">
        <title>The role of N-terminus of Plasmodium falciparum ORC1 in telomeric localization and var gene silencing.</title>
        <authorList>
            <person name="Deshmukh A.S."/>
            <person name="Srivastava S."/>
            <person name="Herrmann S."/>
            <person name="Gupta A."/>
            <person name="Mitra P."/>
            <person name="Gilberger T.W."/>
            <person name="Dhar S.K."/>
        </authorList>
    </citation>
    <scope>FUNCTION</scope>
    <scope>SUBCELLULAR LOCATION</scope>
    <scope>DEVELOPMENTAL STAGE</scope>
    <scope>LEUCINE HEPTAD REPEAT</scope>
    <scope>DOMAIN</scope>
</reference>
<reference key="9">
    <citation type="journal article" date="2013" name="Mol. Biochem. Parasitol.">
        <title>Plasmodium falciparum origin recognition complex subunit 1 (PfOrc1) functionally complements Deltasir3 mutant of Saccharomyces cerevisiae.</title>
        <authorList>
            <person name="Varunan S.M."/>
            <person name="Tripathi J."/>
            <person name="Bhattacharyya S."/>
            <person name="Suhane T."/>
            <person name="Bhattacharyya M.K."/>
        </authorList>
    </citation>
    <scope>FUNCTION</scope>
    <scope>DOMAIN</scope>
</reference>
<reference key="10">
    <citation type="journal article" date="2015" name="Mol. Microbiol.">
        <title>Regulation of Plasmodium falciparum Origin Recognition Complex subunit 1 (PfORC1) function through phosphorylation mediated by CDK-like kinase PK5.</title>
        <authorList>
            <person name="Deshmukh A.S."/>
            <person name="Agarwal M."/>
            <person name="Mehra P."/>
            <person name="Gupta A."/>
            <person name="Gupta N."/>
            <person name="Doerig C.D."/>
            <person name="Dhar S.K."/>
        </authorList>
    </citation>
    <scope>SUBCELLULAR LOCATION</scope>
    <scope>DEVELOPMENTAL STAGE</scope>
    <scope>DOMAIN</scope>
    <scope>PHOSPHORYLATION AT THR-2 AND SER-20</scope>
</reference>
<dbReference type="EC" id="3.6.4.-" evidence="6 10"/>
<dbReference type="EMBL" id="AF373219">
    <property type="protein sequence ID" value="AAK54602.1"/>
    <property type="molecule type" value="Genomic_DNA"/>
</dbReference>
<dbReference type="EMBL" id="LN999947">
    <property type="protein sequence ID" value="CZT99194.1"/>
    <property type="molecule type" value="Genomic_DNA"/>
</dbReference>
<dbReference type="RefSeq" id="XP_001350439.1">
    <property type="nucleotide sequence ID" value="XM_001350403.1"/>
</dbReference>
<dbReference type="SMR" id="Q8I615"/>
<dbReference type="FunCoup" id="Q8I615">
    <property type="interactions" value="687"/>
</dbReference>
<dbReference type="STRING" id="36329.Q8I615"/>
<dbReference type="iPTMnet" id="Q8I615"/>
<dbReference type="PaxDb" id="5833-PFL0150w"/>
<dbReference type="EnsemblProtists" id="CZT99194">
    <property type="protein sequence ID" value="CZT99194"/>
    <property type="gene ID" value="PF3D7_1203000"/>
</dbReference>
<dbReference type="GeneID" id="811083"/>
<dbReference type="KEGG" id="pfa:PF3D7_1203000"/>
<dbReference type="VEuPathDB" id="PlasmoDB:PF3D7_1203000"/>
<dbReference type="HOGENOM" id="CLU_276761_0_0_1"/>
<dbReference type="InParanoid" id="Q8I615"/>
<dbReference type="OMA" id="THYLKER"/>
<dbReference type="OrthoDB" id="1926878at2759"/>
<dbReference type="PhylomeDB" id="Q8I615"/>
<dbReference type="Reactome" id="R-PFA-68616">
    <property type="pathway name" value="Assembly of the ORC complex at the origin of replication"/>
</dbReference>
<dbReference type="Reactome" id="R-PFA-68949">
    <property type="pathway name" value="Orc1 removal from chromatin"/>
</dbReference>
<dbReference type="Proteomes" id="UP000001450">
    <property type="component" value="Chromosome 12"/>
</dbReference>
<dbReference type="GO" id="GO:0000781">
    <property type="term" value="C:chromosome, telomeric region"/>
    <property type="evidence" value="ECO:0007669"/>
    <property type="project" value="UniProtKB-SubCell"/>
</dbReference>
<dbReference type="GO" id="GO:0005737">
    <property type="term" value="C:cytoplasm"/>
    <property type="evidence" value="ECO:0000314"/>
    <property type="project" value="GeneDB"/>
</dbReference>
<dbReference type="GO" id="GO:0005664">
    <property type="term" value="C:nuclear origin of replication recognition complex"/>
    <property type="evidence" value="ECO:0000314"/>
    <property type="project" value="GeneDB"/>
</dbReference>
<dbReference type="GO" id="GO:0005730">
    <property type="term" value="C:nucleolus"/>
    <property type="evidence" value="ECO:0007669"/>
    <property type="project" value="UniProtKB-SubCell"/>
</dbReference>
<dbReference type="GO" id="GO:0005634">
    <property type="term" value="C:nucleus"/>
    <property type="evidence" value="ECO:0000314"/>
    <property type="project" value="UniProtKB"/>
</dbReference>
<dbReference type="GO" id="GO:0005524">
    <property type="term" value="F:ATP binding"/>
    <property type="evidence" value="ECO:0007669"/>
    <property type="project" value="UniProtKB-KW"/>
</dbReference>
<dbReference type="GO" id="GO:0016887">
    <property type="term" value="F:ATP hydrolysis activity"/>
    <property type="evidence" value="ECO:0000314"/>
    <property type="project" value="UniProtKB"/>
</dbReference>
<dbReference type="GO" id="GO:0003688">
    <property type="term" value="F:DNA replication origin binding"/>
    <property type="evidence" value="ECO:0000314"/>
    <property type="project" value="GeneDB"/>
</dbReference>
<dbReference type="GO" id="GO:0046872">
    <property type="term" value="F:metal ion binding"/>
    <property type="evidence" value="ECO:0007669"/>
    <property type="project" value="UniProtKB-KW"/>
</dbReference>
<dbReference type="GO" id="GO:0006270">
    <property type="term" value="P:DNA replication initiation"/>
    <property type="evidence" value="ECO:0000318"/>
    <property type="project" value="GO_Central"/>
</dbReference>
<dbReference type="GO" id="GO:0033314">
    <property type="term" value="P:mitotic DNA replication checkpoint signaling"/>
    <property type="evidence" value="ECO:0000318"/>
    <property type="project" value="GO_Central"/>
</dbReference>
<dbReference type="CDD" id="cd00009">
    <property type="entry name" value="AAA"/>
    <property type="match status" value="1"/>
</dbReference>
<dbReference type="FunFam" id="3.40.50.300:FF:001186">
    <property type="entry name" value="Origin recognition complex subunit 1"/>
    <property type="match status" value="1"/>
</dbReference>
<dbReference type="Gene3D" id="1.10.8.60">
    <property type="match status" value="1"/>
</dbReference>
<dbReference type="Gene3D" id="3.40.50.300">
    <property type="entry name" value="P-loop containing nucleotide triphosphate hydrolases"/>
    <property type="match status" value="1"/>
</dbReference>
<dbReference type="InterPro" id="IPR003593">
    <property type="entry name" value="AAA+_ATPase"/>
</dbReference>
<dbReference type="InterPro" id="IPR003959">
    <property type="entry name" value="ATPase_AAA_core"/>
</dbReference>
<dbReference type="InterPro" id="IPR054425">
    <property type="entry name" value="Cdc6_ORC1-like_ATPase_lid"/>
</dbReference>
<dbReference type="InterPro" id="IPR050311">
    <property type="entry name" value="ORC1/CDC6"/>
</dbReference>
<dbReference type="InterPro" id="IPR027417">
    <property type="entry name" value="P-loop_NTPase"/>
</dbReference>
<dbReference type="PANTHER" id="PTHR10763">
    <property type="entry name" value="CELL DIVISION CONTROL PROTEIN 6-RELATED"/>
    <property type="match status" value="1"/>
</dbReference>
<dbReference type="PANTHER" id="PTHR10763:SF23">
    <property type="entry name" value="ORIGIN RECOGNITION COMPLEX SUBUNIT 1"/>
    <property type="match status" value="1"/>
</dbReference>
<dbReference type="Pfam" id="PF00004">
    <property type="entry name" value="AAA"/>
    <property type="match status" value="1"/>
</dbReference>
<dbReference type="Pfam" id="PF22606">
    <property type="entry name" value="Cdc6-ORC-like_ATPase_lid"/>
    <property type="match status" value="1"/>
</dbReference>
<dbReference type="SMART" id="SM00382">
    <property type="entry name" value="AAA"/>
    <property type="match status" value="1"/>
</dbReference>
<dbReference type="SUPFAM" id="SSF52540">
    <property type="entry name" value="P-loop containing nucleoside triphosphate hydrolases"/>
    <property type="match status" value="1"/>
</dbReference>
<keyword id="KW-0067">ATP-binding</keyword>
<keyword id="KW-0158">Chromosome</keyword>
<keyword id="KW-0235">DNA replication</keyword>
<keyword id="KW-0238">DNA-binding</keyword>
<keyword id="KW-0378">Hydrolase</keyword>
<keyword id="KW-0460">Magnesium</keyword>
<keyword id="KW-0477">Merozoite</keyword>
<keyword id="KW-0479">Metal-binding</keyword>
<keyword id="KW-0547">Nucleotide-binding</keyword>
<keyword id="KW-0539">Nucleus</keyword>
<keyword id="KW-0597">Phosphoprotein</keyword>
<keyword id="KW-1185">Reference proteome</keyword>
<keyword id="KW-0677">Repeat</keyword>
<keyword id="KW-0779">Telomere</keyword>
<sequence length="1189" mass="138738">MTPKKKIFQNFQANDNEILSPTKKGIKLNVSKLNILNFENTIITKEKTNYEYKASLNKEIDEVLNNNNIINTHNNKKNNLNLYDYNNIKNSTHEFYIDLNEQNKQTIKYNDNKFTPINKKEKYNLDETSSSSISSSLTNISSSLTNISSSLTNISSSLSNSLDEKKKKKKIKKNNSTIINILNNNNNNSNIHHNNKHNIYNKYNISKKPQNKEIHTLPSNHQIKKKSNNTYNTCQQKMKKNISKKNTHSIKNNQNDKNKEKNKEKDKNIKKDRDKDIQTKRTSHQSQDQNNHFERRILRSYTRNNDNVKNNLKNNINNNNTLKRSSQSVRIDSDLSSAHQNKRIKYDEKNIIHRNNNNNNNNNNKTTSNNHNKNNKINNNNPSENYKKQTDTKHTNNTQNNKYNKTKTTNTFKHPSKDHTDVNTKTFKSRYINTYTMEEVQKSIKSNTIKLVQENSCEYQDGIIYESIQINDEEYSIGEDVLIFYTPNNNTYNAKSDDKKNQNNNNIKENIYLLKKGKISSFYKSTNSKVIEVEICFYYDESDEQRIRELEKKQTSRRCKEDFNIYLDDDTKYYNLLGNIHFTILDANYIYKKIYVYNEIETFEEDTHARKGKNKFLCTHFIKDKEDRLCFIPNEDHWDNLVLGSSDLYYYFANEKKLNKNKSLKLIIEKLKINDKINDTQANQKKNNKKEYMNKAQTTTNVKANTHTKTLNDHNKSKTTKNKESSSTSFLQDVKKKSDPHNNDFQSSLKEDQENYYINLLKNIKDPTDKAIRMMQLDVVPKYLPCREKEIKEVHGFLESGIKQSGSNQILYISGMPGTGKTATVYSVIQLLQIKSRKKLLPSFNVFEINGMNVVHPNAAYQVFYKQLFNKKPPNALNSFKIIDRLFNKSQKDNRDVSILIIDEIDYLITKTQKVLFTLFDWPTKINSKLILIAISNTMDLPDRLIPRCRSRLAFGRLVFSPYKGDEIEKIIKERLENCKEIIDHTAIQLCARKVANVSGDIRKALQICRKAFENKRGHKIVPRDITEATNQLFDSPLTNAINYLPWAFKIFLTCLIIELRIINEFVIPYKKVVNRYKILIETSGKYIGMCSDNELFKIMLDKLVKMGILLIRPYIPLENISKNKSKEALLGFNESSKKGNNQKITRAQVSPDIDKESGDMGIELNVETQLIITALMKDPDCSKKLNFY</sequence>
<organism>
    <name type="scientific">Plasmodium falciparum (isolate 3D7)</name>
    <dbReference type="NCBI Taxonomy" id="36329"/>
    <lineage>
        <taxon>Eukaryota</taxon>
        <taxon>Sar</taxon>
        <taxon>Alveolata</taxon>
        <taxon>Apicomplexa</taxon>
        <taxon>Aconoidasida</taxon>
        <taxon>Haemosporida</taxon>
        <taxon>Plasmodiidae</taxon>
        <taxon>Plasmodium</taxon>
        <taxon>Plasmodium (Laverania)</taxon>
    </lineage>
</organism>
<evidence type="ECO:0000250" key="1">
    <source>
        <dbReference type="UniProtKB" id="P54784"/>
    </source>
</evidence>
<evidence type="ECO:0000250" key="2">
    <source>
        <dbReference type="UniProtKB" id="Q13415"/>
    </source>
</evidence>
<evidence type="ECO:0000255" key="3"/>
<evidence type="ECO:0000256" key="4">
    <source>
        <dbReference type="SAM" id="MobiDB-lite"/>
    </source>
</evidence>
<evidence type="ECO:0000269" key="5">
    <source>
    </source>
</evidence>
<evidence type="ECO:0000269" key="6">
    <source>
    </source>
</evidence>
<evidence type="ECO:0000269" key="7">
    <source>
    </source>
</evidence>
<evidence type="ECO:0000269" key="8">
    <source>
    </source>
</evidence>
<evidence type="ECO:0000269" key="9">
    <source>
    </source>
</evidence>
<evidence type="ECO:0000269" key="10">
    <source>
    </source>
</evidence>
<evidence type="ECO:0000269" key="11">
    <source>
    </source>
</evidence>
<evidence type="ECO:0000269" key="12">
    <source>
    </source>
</evidence>
<evidence type="ECO:0000269" key="13">
    <source>
    </source>
</evidence>
<evidence type="ECO:0000303" key="14">
    <source>
    </source>
</evidence>
<evidence type="ECO:0000305" key="15">
    <source>
    </source>
</evidence>
<evidence type="ECO:0000305" key="16">
    <source>
    </source>
</evidence>
<evidence type="ECO:0000305" key="17">
    <source>
    </source>
</evidence>
<evidence type="ECO:0000305" key="18">
    <source>
    </source>
</evidence>
<evidence type="ECO:0000312" key="19">
    <source>
        <dbReference type="EMBL" id="AAK54602.1"/>
    </source>
</evidence>
<name>ORC1_PLAF7</name>
<protein>
    <recommendedName>
        <fullName evidence="14">Origin recognition complex subunit 1</fullName>
        <shortName evidence="14">PfORC1</shortName>
        <ecNumber evidence="6 10">3.6.4.-</ecNumber>
    </recommendedName>
</protein>